<organism>
    <name type="scientific">Caldanaerobacter subterraneus subsp. tengcongensis (strain DSM 15242 / JCM 11007 / NBRC 100824 / MB4)</name>
    <name type="common">Thermoanaerobacter tengcongensis</name>
    <dbReference type="NCBI Taxonomy" id="273068"/>
    <lineage>
        <taxon>Bacteria</taxon>
        <taxon>Bacillati</taxon>
        <taxon>Bacillota</taxon>
        <taxon>Clostridia</taxon>
        <taxon>Thermoanaerobacterales</taxon>
        <taxon>Thermoanaerobacteraceae</taxon>
        <taxon>Caldanaerobacter</taxon>
    </lineage>
</organism>
<reference key="1">
    <citation type="journal article" date="2002" name="Genome Res.">
        <title>A complete sequence of the T. tengcongensis genome.</title>
        <authorList>
            <person name="Bao Q."/>
            <person name="Tian Y."/>
            <person name="Li W."/>
            <person name="Xu Z."/>
            <person name="Xuan Z."/>
            <person name="Hu S."/>
            <person name="Dong W."/>
            <person name="Yang J."/>
            <person name="Chen Y."/>
            <person name="Xue Y."/>
            <person name="Xu Y."/>
            <person name="Lai X."/>
            <person name="Huang L."/>
            <person name="Dong X."/>
            <person name="Ma Y."/>
            <person name="Ling L."/>
            <person name="Tan H."/>
            <person name="Chen R."/>
            <person name="Wang J."/>
            <person name="Yu J."/>
            <person name="Yang H."/>
        </authorList>
    </citation>
    <scope>NUCLEOTIDE SEQUENCE [LARGE SCALE GENOMIC DNA]</scope>
    <source>
        <strain>DSM 15242 / JCM 11007 / NBRC 100824 / MB4</strain>
    </source>
</reference>
<proteinExistence type="inferred from homology"/>
<comment type="similarity">
    <text evidence="1">Belongs to the UPF0236 family.</text>
</comment>
<evidence type="ECO:0000305" key="1"/>
<gene>
    <name type="ordered locus">TTE0033</name>
</gene>
<gene>
    <name type="ordered locus">TTE0744</name>
</gene>
<gene>
    <name type="ordered locus">TTE0838</name>
</gene>
<gene>
    <name type="ordered locus">TTE0852</name>
</gene>
<gene>
    <name type="ordered locus">TTE1082</name>
</gene>
<gene>
    <name type="ordered locus">TTE1247</name>
</gene>
<gene>
    <name type="ordered locus">TTE1519</name>
</gene>
<gene>
    <name type="ordered locus">TTE1678</name>
</gene>
<gene>
    <name type="ordered locus">TTE1739</name>
</gene>
<gene>
    <name type="ordered locus">TTE1823</name>
</gene>
<gene>
    <name type="ordered locus">TTE2212</name>
</gene>
<accession>Q8R6I7</accession>
<sequence length="467" mass="54758">MKKHIFEDIILQNALNFTREMMNVFEDLLKNGMNITELVARIKELTDKLGREAIEAIIEELDRIIKEDKRRKEKWVVERKDKKRLTTVLGDIEYERTYYKSREDGRYTYLVDDALEIGRHERIEKGVKIKLVENAIEESYEKSSEKACPEKISKQTVLNAIREIGEVEVKREIKEKKEVRVLYIEADEDHVPLQDGSSETPRLIYIHEGREEKNGRNVLKNVYYKAYVGEKAEDIWIDVANYIEENYKEEKIEKIYIAGDGAPWIKEGLEWIVKSRFVLDRYHLNKYVLKATSKEPKYRDKIWRAINEGDKEGVKKIFGELIKIAKEEKEKEKIKEAKRYILNNWEGIKIYSEDEDVIGCSAEGHISHVFSARLSRNPLGWSREGLKLMAKLRVFSKNGGDLREVEWGKKKNINAGSYKLTEKQIKEAVRRVKTSTNEKINNITVLNIGKVTPIYRVLRALKYAQVI</sequence>
<keyword id="KW-1185">Reference proteome</keyword>
<dbReference type="EMBL" id="AE008691">
    <property type="protein sequence ID" value="AAM23347.1"/>
    <property type="molecule type" value="Genomic_DNA"/>
</dbReference>
<dbReference type="EMBL" id="AE008691">
    <property type="protein sequence ID" value="AAM24005.1"/>
    <property type="molecule type" value="Genomic_DNA"/>
</dbReference>
<dbReference type="EMBL" id="AE008691">
    <property type="protein sequence ID" value="AAM24095.1"/>
    <property type="molecule type" value="Genomic_DNA"/>
</dbReference>
<dbReference type="EMBL" id="AE008691">
    <property type="protein sequence ID" value="AAM24110.1"/>
    <property type="molecule type" value="Genomic_DNA"/>
</dbReference>
<dbReference type="EMBL" id="AE008691">
    <property type="protein sequence ID" value="AAM24327.1"/>
    <property type="molecule type" value="Genomic_DNA"/>
</dbReference>
<dbReference type="EMBL" id="AE008691">
    <property type="protein sequence ID" value="AAM24471.1"/>
    <property type="molecule type" value="Genomic_DNA"/>
</dbReference>
<dbReference type="EMBL" id="AE008691">
    <property type="protein sequence ID" value="AAM24736.1"/>
    <property type="molecule type" value="Genomic_DNA"/>
</dbReference>
<dbReference type="EMBL" id="AE008691">
    <property type="protein sequence ID" value="AAM24879.1"/>
    <property type="molecule type" value="Genomic_DNA"/>
</dbReference>
<dbReference type="EMBL" id="AE008691">
    <property type="protein sequence ID" value="AAM24933.1"/>
    <property type="molecule type" value="Genomic_DNA"/>
</dbReference>
<dbReference type="EMBL" id="AE008691">
    <property type="protein sequence ID" value="AAM25014.1"/>
    <property type="molecule type" value="Genomic_DNA"/>
</dbReference>
<dbReference type="EMBL" id="AE008691">
    <property type="protein sequence ID" value="AAM25364.1"/>
    <property type="molecule type" value="Genomic_DNA"/>
</dbReference>
<dbReference type="RefSeq" id="WP_011024560.1">
    <property type="nucleotide sequence ID" value="NC_003869.1"/>
</dbReference>
<dbReference type="STRING" id="273068.TTE0033"/>
<dbReference type="KEGG" id="tte:TTE0033"/>
<dbReference type="KEGG" id="tte:TTE0744"/>
<dbReference type="KEGG" id="tte:TTE0838"/>
<dbReference type="KEGG" id="tte:TTE0852"/>
<dbReference type="KEGG" id="tte:TTE1082"/>
<dbReference type="KEGG" id="tte:TTE1247"/>
<dbReference type="KEGG" id="tte:TTE1519"/>
<dbReference type="KEGG" id="tte:TTE1678"/>
<dbReference type="KEGG" id="tte:TTE1739"/>
<dbReference type="KEGG" id="tte:TTE1823"/>
<dbReference type="KEGG" id="tte:TTE2212"/>
<dbReference type="eggNOG" id="COG3464">
    <property type="taxonomic scope" value="Bacteria"/>
</dbReference>
<dbReference type="HOGENOM" id="CLU_040782_0_1_9"/>
<dbReference type="OrthoDB" id="1719576at2"/>
<dbReference type="Proteomes" id="UP000000555">
    <property type="component" value="Chromosome"/>
</dbReference>
<dbReference type="InterPro" id="IPR009620">
    <property type="entry name" value="UPF0236"/>
</dbReference>
<dbReference type="NCBIfam" id="NF033529">
    <property type="entry name" value="transpos_ISLre2"/>
    <property type="match status" value="1"/>
</dbReference>
<dbReference type="Pfam" id="PF06782">
    <property type="entry name" value="UPF0236"/>
    <property type="match status" value="1"/>
</dbReference>
<feature type="chain" id="PRO_0000220408" description="UPF0236 protein TTE0033/TTE0744/TTE0838/TTE0852/TTE1082/TTE1247/TTE1519/TTE1678/TTE1739/TTE1823/TTE2212">
    <location>
        <begin position="1"/>
        <end position="467"/>
    </location>
</feature>
<protein>
    <recommendedName>
        <fullName>UPF0236 protein TTE0033/TTE0744/TTE0838/TTE0852/TTE1082/TTE1247/TTE1519/TTE1678/TTE1739/TTE1823/TTE2212</fullName>
    </recommendedName>
</protein>
<name>Y033_CALS4</name>